<reference key="1">
    <citation type="journal article" date="2004" name="Genome Res.">
        <title>Genome sequence of Haloarcula marismortui: a halophilic archaeon from the Dead Sea.</title>
        <authorList>
            <person name="Baliga N.S."/>
            <person name="Bonneau R."/>
            <person name="Facciotti M.T."/>
            <person name="Pan M."/>
            <person name="Glusman G."/>
            <person name="Deutsch E.W."/>
            <person name="Shannon P."/>
            <person name="Chiu Y."/>
            <person name="Weng R.S."/>
            <person name="Gan R.R."/>
            <person name="Hung P."/>
            <person name="Date S.V."/>
            <person name="Marcotte E."/>
            <person name="Hood L."/>
            <person name="Ng W.V."/>
        </authorList>
    </citation>
    <scope>NUCLEOTIDE SEQUENCE [LARGE SCALE GENOMIC DNA]</scope>
    <source>
        <strain>ATCC 43049 / DSM 3752 / JCM 8966 / VKM B-1809</strain>
    </source>
</reference>
<gene>
    <name evidence="1" type="primary">fluC1</name>
    <name evidence="1" type="synonym">crcB1</name>
    <name type="ordered locus">rrnAC2252</name>
</gene>
<accession>Q5V070</accession>
<evidence type="ECO:0000255" key="1">
    <source>
        <dbReference type="HAMAP-Rule" id="MF_00454"/>
    </source>
</evidence>
<keyword id="KW-1003">Cell membrane</keyword>
<keyword id="KW-0407">Ion channel</keyword>
<keyword id="KW-0406">Ion transport</keyword>
<keyword id="KW-0472">Membrane</keyword>
<keyword id="KW-1185">Reference proteome</keyword>
<keyword id="KW-0812">Transmembrane</keyword>
<keyword id="KW-1133">Transmembrane helix</keyword>
<keyword id="KW-0813">Transport</keyword>
<dbReference type="EMBL" id="AY596297">
    <property type="protein sequence ID" value="AAV47083.1"/>
    <property type="molecule type" value="Genomic_DNA"/>
</dbReference>
<dbReference type="RefSeq" id="WP_004958879.1">
    <property type="nucleotide sequence ID" value="NZ_CP039138.1"/>
</dbReference>
<dbReference type="SMR" id="Q5V070"/>
<dbReference type="STRING" id="272569.rrnAC2252"/>
<dbReference type="PaxDb" id="272569-rrnAC2252"/>
<dbReference type="EnsemblBacteria" id="AAV47083">
    <property type="protein sequence ID" value="AAV47083"/>
    <property type="gene ID" value="rrnAC2252"/>
</dbReference>
<dbReference type="KEGG" id="hma:rrnAC2252"/>
<dbReference type="PATRIC" id="fig|272569.17.peg.2882"/>
<dbReference type="eggNOG" id="arCOG04701">
    <property type="taxonomic scope" value="Archaea"/>
</dbReference>
<dbReference type="HOGENOM" id="CLU_114342_1_4_2"/>
<dbReference type="Proteomes" id="UP000001169">
    <property type="component" value="Chromosome I"/>
</dbReference>
<dbReference type="GO" id="GO:0005886">
    <property type="term" value="C:plasma membrane"/>
    <property type="evidence" value="ECO:0007669"/>
    <property type="project" value="UniProtKB-SubCell"/>
</dbReference>
<dbReference type="GO" id="GO:0062054">
    <property type="term" value="F:fluoride channel activity"/>
    <property type="evidence" value="ECO:0007669"/>
    <property type="project" value="UniProtKB-UniRule"/>
</dbReference>
<dbReference type="GO" id="GO:0140114">
    <property type="term" value="P:cellular detoxification of fluoride"/>
    <property type="evidence" value="ECO:0007669"/>
    <property type="project" value="UniProtKB-UniRule"/>
</dbReference>
<dbReference type="HAMAP" id="MF_00454">
    <property type="entry name" value="FluC"/>
    <property type="match status" value="1"/>
</dbReference>
<dbReference type="InterPro" id="IPR003691">
    <property type="entry name" value="FluC"/>
</dbReference>
<dbReference type="Pfam" id="PF02537">
    <property type="entry name" value="CRCB"/>
    <property type="match status" value="1"/>
</dbReference>
<proteinExistence type="inferred from homology"/>
<protein>
    <recommendedName>
        <fullName evidence="1">Fluoride-specific ion channel FluC 1</fullName>
    </recommendedName>
</protein>
<sequence length="127" mass="13055">MADTHPLVTVETIVLVGLGGFAGSNLRYFVGLFFPGLQGTLLVNVCGSFALGVLVYEGLQVGALASETKLAASTGFISSFTTYSTFAVETVLTPEWAVANVVGSYALGFAGVLVGREVVRLFAGGGQ</sequence>
<organism>
    <name type="scientific">Haloarcula marismortui (strain ATCC 43049 / DSM 3752 / JCM 8966 / VKM B-1809)</name>
    <name type="common">Halobacterium marismortui</name>
    <dbReference type="NCBI Taxonomy" id="272569"/>
    <lineage>
        <taxon>Archaea</taxon>
        <taxon>Methanobacteriati</taxon>
        <taxon>Methanobacteriota</taxon>
        <taxon>Stenosarchaea group</taxon>
        <taxon>Halobacteria</taxon>
        <taxon>Halobacteriales</taxon>
        <taxon>Haloarculaceae</taxon>
        <taxon>Haloarcula</taxon>
    </lineage>
</organism>
<feature type="chain" id="PRO_0000110221" description="Fluoride-specific ion channel FluC 1">
    <location>
        <begin position="1"/>
        <end position="127"/>
    </location>
</feature>
<feature type="transmembrane region" description="Helical" evidence="1">
    <location>
        <begin position="6"/>
        <end position="26"/>
    </location>
</feature>
<feature type="transmembrane region" description="Helical" evidence="1">
    <location>
        <begin position="29"/>
        <end position="49"/>
    </location>
</feature>
<feature type="transmembrane region" description="Helical" evidence="1">
    <location>
        <begin position="95"/>
        <end position="115"/>
    </location>
</feature>
<comment type="function">
    <text evidence="1">Fluoride-specific ion channel. Important for reducing fluoride concentration in the cell, thus reducing its toxicity.</text>
</comment>
<comment type="catalytic activity">
    <reaction evidence="1">
        <text>fluoride(in) = fluoride(out)</text>
        <dbReference type="Rhea" id="RHEA:76159"/>
        <dbReference type="ChEBI" id="CHEBI:17051"/>
    </reaction>
    <physiologicalReaction direction="left-to-right" evidence="1">
        <dbReference type="Rhea" id="RHEA:76160"/>
    </physiologicalReaction>
</comment>
<comment type="subcellular location">
    <subcellularLocation>
        <location evidence="1">Cell membrane</location>
        <topology evidence="1">Multi-pass membrane protein</topology>
    </subcellularLocation>
</comment>
<comment type="similarity">
    <text evidence="1">Belongs to the fluoride channel Fluc/FEX (TC 1.A.43) family.</text>
</comment>
<name>FLUC1_HALMA</name>